<feature type="chain" id="PRO_0000416901" description="Doublesex- and mab-3-related transcription factor 1Y">
    <location>
        <begin position="1"/>
        <end position="267"/>
    </location>
</feature>
<feature type="DNA-binding region" description="DM" evidence="1">
    <location>
        <begin position="16"/>
        <end position="63"/>
    </location>
</feature>
<feature type="region of interest" description="Disordered" evidence="2">
    <location>
        <begin position="98"/>
        <end position="121"/>
    </location>
</feature>
<feature type="sequence conflict" description="In Ref. 2; AAN05398." evidence="5" ref="2">
    <original>S</original>
    <variation>G</variation>
    <location>
        <position position="23"/>
    </location>
</feature>
<feature type="sequence conflict" description="In Ref. 2; AAN05398." evidence="5" ref="2">
    <original>HCLKCKLIVD</original>
    <variation>QCFKCEQIMV</variation>
    <location>
        <begin position="41"/>
        <end position="50"/>
    </location>
</feature>
<feature type="sequence conflict" description="In Ref. 2; AAN05398." evidence="5" ref="2">
    <original>L</original>
    <variation>D</variation>
    <location>
        <position position="61"/>
    </location>
</feature>
<feature type="sequence conflict" description="In Ref. 2; AAN05398." evidence="5" ref="2">
    <original>PAPPPN</original>
    <variation>LAIPPS</variation>
    <location>
        <begin position="105"/>
        <end position="110"/>
    </location>
</feature>
<feature type="sequence conflict" description="In Ref. 2; AAN05398." evidence="5" ref="2">
    <original>V</original>
    <variation>A</variation>
    <location>
        <position position="116"/>
    </location>
</feature>
<feature type="sequence conflict" description="In Ref. 2; AAN05398." evidence="5" ref="2">
    <original>S</original>
    <variation>G</variation>
    <location>
        <position position="135"/>
    </location>
</feature>
<feature type="sequence conflict" description="In Ref. 2; AAN05398." evidence="5" ref="2">
    <original>QP</original>
    <variation>CL</variation>
    <location>
        <begin position="141"/>
        <end position="142"/>
    </location>
</feature>
<feature type="sequence conflict" description="In Ref. 2; AAN05398." evidence="5" ref="2">
    <original>Y</original>
    <variation>H</variation>
    <location>
        <position position="164"/>
    </location>
</feature>
<feature type="sequence conflict" description="In Ref. 2; AAN05398." evidence="5" ref="2">
    <original>A</original>
    <variation>T</variation>
    <location>
        <position position="198"/>
    </location>
</feature>
<feature type="sequence conflict" description="In Ref. 2; AAN05398." evidence="5" ref="2">
    <original>G</original>
    <variation>D</variation>
    <location>
        <position position="219"/>
    </location>
</feature>
<feature type="sequence conflict" description="In Ref. 2; AAN05398." evidence="5" ref="2">
    <original>K</original>
    <variation>R</variation>
    <location>
        <position position="251"/>
    </location>
</feature>
<feature type="sequence conflict" description="In Ref. 2; AAN05398." evidence="5" ref="2">
    <original>SSRPTP</original>
    <variation>VFPADSMSSETK</variation>
    <location>
        <begin position="262"/>
        <end position="267"/>
    </location>
</feature>
<gene>
    <name type="primary">dmrt1y</name>
    <name type="synonym">dmy</name>
</gene>
<keyword id="KW-0010">Activator</keyword>
<keyword id="KW-0217">Developmental protein</keyword>
<keyword id="KW-0221">Differentiation</keyword>
<keyword id="KW-0238">DNA-binding</keyword>
<keyword id="KW-0479">Metal-binding</keyword>
<keyword id="KW-0539">Nucleus</keyword>
<keyword id="KW-1185">Reference proteome</keyword>
<keyword id="KW-0678">Repressor</keyword>
<keyword id="KW-0726">Sexual differentiation</keyword>
<keyword id="KW-0804">Transcription</keyword>
<keyword id="KW-0805">Transcription regulation</keyword>
<keyword id="KW-0862">Zinc</keyword>
<name>DMT1Y_ORYLA</name>
<sequence length="267" mass="29299">MSKEKQCRPGPRVPKCSRCRNHSLKTPLKGHKRFCRWKDCHCLKCKLIVDRQRVMAAQVALRRQQAQEEELGICSPEASSGPEVVVKNEAGADCLFSVEGRSGTPAPPPNPNPLSVAGSYSASSSSPSAAARVYSEEASDQPLETSYYNFYQPSRYSSYYGNLYNYQQYQQMPPSDGRLSGHSMPSQYRMHSFYPGTAYLPQGLGSPVPPYFSLEDNDGAAASFFPSSLTSTHDSTLTYRSISSLVNDGVKAEFESGGQPPSSRPTP</sequence>
<evidence type="ECO:0000255" key="1">
    <source>
        <dbReference type="PROSITE-ProRule" id="PRU00070"/>
    </source>
</evidence>
<evidence type="ECO:0000256" key="2">
    <source>
        <dbReference type="SAM" id="MobiDB-lite"/>
    </source>
</evidence>
<evidence type="ECO:0000269" key="3">
    <source>
    </source>
</evidence>
<evidence type="ECO:0000269" key="4">
    <source>
    </source>
</evidence>
<evidence type="ECO:0000305" key="5"/>
<organism>
    <name type="scientific">Oryzias latipes</name>
    <name type="common">Japanese rice fish</name>
    <name type="synonym">Japanese killifish</name>
    <dbReference type="NCBI Taxonomy" id="8090"/>
    <lineage>
        <taxon>Eukaryota</taxon>
        <taxon>Metazoa</taxon>
        <taxon>Chordata</taxon>
        <taxon>Craniata</taxon>
        <taxon>Vertebrata</taxon>
        <taxon>Euteleostomi</taxon>
        <taxon>Actinopterygii</taxon>
        <taxon>Neopterygii</taxon>
        <taxon>Teleostei</taxon>
        <taxon>Neoteleostei</taxon>
        <taxon>Acanthomorphata</taxon>
        <taxon>Ovalentaria</taxon>
        <taxon>Atherinomorphae</taxon>
        <taxon>Beloniformes</taxon>
        <taxon>Adrianichthyidae</taxon>
        <taxon>Oryziinae</taxon>
        <taxon>Oryzias</taxon>
    </lineage>
</organism>
<dbReference type="EMBL" id="AB071534">
    <property type="protein sequence ID" value="BAB92012.1"/>
    <property type="molecule type" value="mRNA"/>
</dbReference>
<dbReference type="EMBL" id="AY129240">
    <property type="protein sequence ID" value="AAN05398.1"/>
    <property type="molecule type" value="mRNA"/>
</dbReference>
<dbReference type="EMBL" id="AY129241">
    <property type="protein sequence ID" value="AAN05399.1"/>
    <property type="molecule type" value="Genomic_DNA"/>
</dbReference>
<dbReference type="RefSeq" id="NP_001098150.1">
    <property type="nucleotide sequence ID" value="NM_001104680.1"/>
</dbReference>
<dbReference type="SMR" id="Q8JIR6"/>
<dbReference type="FunCoup" id="Q8JIR6">
    <property type="interactions" value="661"/>
</dbReference>
<dbReference type="GeneID" id="101161472"/>
<dbReference type="CTD" id="1761"/>
<dbReference type="InParanoid" id="Q8JIR6"/>
<dbReference type="OrthoDB" id="9946337at2759"/>
<dbReference type="Proteomes" id="UP000001038">
    <property type="component" value="Unplaced"/>
</dbReference>
<dbReference type="Proteomes" id="UP000265180">
    <property type="component" value="Chromosome 9"/>
</dbReference>
<dbReference type="Proteomes" id="UP000265200">
    <property type="component" value="Chromosome 9"/>
</dbReference>
<dbReference type="GO" id="GO:0005634">
    <property type="term" value="C:nucleus"/>
    <property type="evidence" value="ECO:0000318"/>
    <property type="project" value="GO_Central"/>
</dbReference>
<dbReference type="GO" id="GO:0000981">
    <property type="term" value="F:DNA-binding transcription factor activity, RNA polymerase II-specific"/>
    <property type="evidence" value="ECO:0000318"/>
    <property type="project" value="GO_Central"/>
</dbReference>
<dbReference type="GO" id="GO:0046872">
    <property type="term" value="F:metal ion binding"/>
    <property type="evidence" value="ECO:0007669"/>
    <property type="project" value="UniProtKB-KW"/>
</dbReference>
<dbReference type="GO" id="GO:0000978">
    <property type="term" value="F:RNA polymerase II cis-regulatory region sequence-specific DNA binding"/>
    <property type="evidence" value="ECO:0000318"/>
    <property type="project" value="GO_Central"/>
</dbReference>
<dbReference type="GO" id="GO:0030154">
    <property type="term" value="P:cell differentiation"/>
    <property type="evidence" value="ECO:0007669"/>
    <property type="project" value="UniProtKB-KW"/>
</dbReference>
<dbReference type="GO" id="GO:0030238">
    <property type="term" value="P:male sex determination"/>
    <property type="evidence" value="ECO:0000315"/>
    <property type="project" value="UniProtKB"/>
</dbReference>
<dbReference type="GO" id="GO:0046661">
    <property type="term" value="P:male sex differentiation"/>
    <property type="evidence" value="ECO:0000315"/>
    <property type="project" value="UniProtKB"/>
</dbReference>
<dbReference type="GO" id="GO:0006357">
    <property type="term" value="P:regulation of transcription by RNA polymerase II"/>
    <property type="evidence" value="ECO:0000318"/>
    <property type="project" value="GO_Central"/>
</dbReference>
<dbReference type="GO" id="GO:0007548">
    <property type="term" value="P:sex differentiation"/>
    <property type="evidence" value="ECO:0000318"/>
    <property type="project" value="GO_Central"/>
</dbReference>
<dbReference type="FunFam" id="4.10.1040.10:FF:000001">
    <property type="entry name" value="doublesex- and mab-3-related transcription factor 1"/>
    <property type="match status" value="1"/>
</dbReference>
<dbReference type="Gene3D" id="4.10.1040.10">
    <property type="entry name" value="DM DNA-binding domain"/>
    <property type="match status" value="1"/>
</dbReference>
<dbReference type="InterPro" id="IPR001275">
    <property type="entry name" value="DM_DNA-bd"/>
</dbReference>
<dbReference type="InterPro" id="IPR036407">
    <property type="entry name" value="DM_DNA-bd_sf"/>
</dbReference>
<dbReference type="InterPro" id="IPR026607">
    <property type="entry name" value="DMRT"/>
</dbReference>
<dbReference type="InterPro" id="IPR022114">
    <property type="entry name" value="DMRT1-like"/>
</dbReference>
<dbReference type="PANTHER" id="PTHR12322">
    <property type="entry name" value="DOUBLESEX AND MAB-3 RELATED TRANSCRIPTION FACTOR DMRT"/>
    <property type="match status" value="1"/>
</dbReference>
<dbReference type="PANTHER" id="PTHR12322:SF70">
    <property type="entry name" value="DOUBLESEX- AND MAB-3-RELATED TRANSCRIPTION FACTOR 1"/>
    <property type="match status" value="1"/>
</dbReference>
<dbReference type="Pfam" id="PF00751">
    <property type="entry name" value="DM"/>
    <property type="match status" value="1"/>
</dbReference>
<dbReference type="Pfam" id="PF12374">
    <property type="entry name" value="Dmrt1"/>
    <property type="match status" value="1"/>
</dbReference>
<dbReference type="SMART" id="SM00301">
    <property type="entry name" value="DM"/>
    <property type="match status" value="1"/>
</dbReference>
<dbReference type="SUPFAM" id="SSF82927">
    <property type="entry name" value="Cysteine-rich DNA binding domain, (DM domain)"/>
    <property type="match status" value="1"/>
</dbReference>
<dbReference type="PROSITE" id="PS40000">
    <property type="entry name" value="DM_1"/>
    <property type="match status" value="1"/>
</dbReference>
<dbReference type="PROSITE" id="PS50809">
    <property type="entry name" value="DM_2"/>
    <property type="match status" value="1"/>
</dbReference>
<proteinExistence type="evidence at transcript level"/>
<protein>
    <recommendedName>
        <fullName>Doublesex- and mab-3-related transcription factor 1Y</fullName>
    </recommendedName>
    <alternativeName>
        <fullName>Y-linked doublesex- and mab-3-related transcription factor</fullName>
    </alternativeName>
    <alternativeName>
        <fullName>Y-specific doublesex- and mab-3-related transcription factor</fullName>
        <shortName>DMY</shortName>
    </alternativeName>
</protein>
<reference key="1">
    <citation type="journal article" date="2002" name="Nature">
        <title>DMY is a Y-specific DM-domain gene required for male development in the medaka fish.</title>
        <authorList>
            <person name="Matsuda M."/>
            <person name="Nagahama Y."/>
            <person name="Shinomiya A."/>
            <person name="Sato T."/>
            <person name="Matsuda C."/>
            <person name="Kobayashi T."/>
            <person name="Morrey C.E."/>
            <person name="Shibata N."/>
            <person name="Asakawa S."/>
            <person name="Shimizu N."/>
            <person name="Hori H."/>
            <person name="Hamaguchi S."/>
            <person name="Sakaizumi M."/>
        </authorList>
    </citation>
    <scope>NUCLEOTIDE SEQUENCE [MRNA]</scope>
    <scope>FUNCTION</scope>
    <scope>DEVELOPMENTAL STAGE</scope>
    <scope>DISRUPTION PHENOTYPE</scope>
    <source>
        <strain>HNI</strain>
    </source>
</reference>
<reference key="2">
    <citation type="journal article" date="2002" name="Proc. Natl. Acad. Sci. U.S.A.">
        <title>A duplicated copy of DMRT1 in the sex-determining region of the Y chromosome of the medaka, Oryzias latipes.</title>
        <authorList>
            <person name="Nanda I."/>
            <person name="Kondo M."/>
            <person name="Hornung U."/>
            <person name="Asakawa S."/>
            <person name="Winkler C."/>
            <person name="Shimizu A."/>
            <person name="Shan Z."/>
            <person name="Haaf T."/>
            <person name="Shimizu N."/>
            <person name="Shima A."/>
            <person name="Schmid M."/>
            <person name="Schartl M."/>
        </authorList>
    </citation>
    <scope>NUCLEOTIDE SEQUENCE [GENOMIC DNA]</scope>
    <scope>TISSUE SPECIFICITY</scope>
    <source>
        <strain>HNI</strain>
    </source>
</reference>
<accession>Q8JIR6</accession>
<accession>Q8AY26</accession>
<comment type="function">
    <text evidence="3">Transcription factor that plays a key role in male sex determination and differentiation by controlling testis development and germ cell proliferation. Acts both as a transcription repressor and activator.</text>
</comment>
<comment type="subcellular location">
    <subcellularLocation>
        <location evidence="1">Nucleus</location>
    </subcellularLocation>
</comment>
<comment type="tissue specificity">
    <text evidence="4">Testis-specific. Localizes to Sertoli cells.</text>
</comment>
<comment type="developmental stage">
    <text evidence="3">Expression starts at the neurula stage and persists during embryogenesis and larval stages until adulthood. At hatching and 5 days after hatching, present in XY embryos, but not in XX embryos. Detected only in the somatic cells surrounding germ cells in XY embryos.</text>
</comment>
<comment type="disruption phenotype">
    <text evidence="3">Feminization of XY offsprings.</text>
</comment>
<comment type="similarity">
    <text evidence="5">Belongs to the DMRT family.</text>
</comment>